<evidence type="ECO:0000255" key="1">
    <source>
        <dbReference type="HAMAP-Rule" id="MF_01402"/>
    </source>
</evidence>
<evidence type="ECO:0000256" key="2">
    <source>
        <dbReference type="SAM" id="MobiDB-lite"/>
    </source>
</evidence>
<dbReference type="EC" id="5.4.2.12" evidence="1"/>
<dbReference type="EMBL" id="CP000562">
    <property type="protein sequence ID" value="ABN56358.1"/>
    <property type="molecule type" value="Genomic_DNA"/>
</dbReference>
<dbReference type="RefSeq" id="WP_011843268.1">
    <property type="nucleotide sequence ID" value="NC_009051.1"/>
</dbReference>
<dbReference type="SMR" id="A3CSK8"/>
<dbReference type="STRING" id="368407.Memar_0425"/>
<dbReference type="GeneID" id="4847528"/>
<dbReference type="KEGG" id="mem:Memar_0425"/>
<dbReference type="eggNOG" id="arCOG01696">
    <property type="taxonomic scope" value="Archaea"/>
</dbReference>
<dbReference type="HOGENOM" id="CLU_034906_2_0_2"/>
<dbReference type="OrthoDB" id="52918at2157"/>
<dbReference type="UniPathway" id="UPA00109">
    <property type="reaction ID" value="UER00186"/>
</dbReference>
<dbReference type="Proteomes" id="UP000002146">
    <property type="component" value="Chromosome"/>
</dbReference>
<dbReference type="GO" id="GO:0046872">
    <property type="term" value="F:metal ion binding"/>
    <property type="evidence" value="ECO:0007669"/>
    <property type="project" value="InterPro"/>
</dbReference>
<dbReference type="GO" id="GO:0004619">
    <property type="term" value="F:phosphoglycerate mutase activity"/>
    <property type="evidence" value="ECO:0007669"/>
    <property type="project" value="UniProtKB-EC"/>
</dbReference>
<dbReference type="GO" id="GO:0006096">
    <property type="term" value="P:glycolytic process"/>
    <property type="evidence" value="ECO:0007669"/>
    <property type="project" value="UniProtKB-UniRule"/>
</dbReference>
<dbReference type="CDD" id="cd16011">
    <property type="entry name" value="iPGM_like"/>
    <property type="match status" value="1"/>
</dbReference>
<dbReference type="Gene3D" id="3.40.720.10">
    <property type="entry name" value="Alkaline Phosphatase, subunit A"/>
    <property type="match status" value="2"/>
</dbReference>
<dbReference type="HAMAP" id="MF_01402_A">
    <property type="entry name" value="ApgM_A"/>
    <property type="match status" value="1"/>
</dbReference>
<dbReference type="InterPro" id="IPR017850">
    <property type="entry name" value="Alkaline_phosphatase_core_sf"/>
</dbReference>
<dbReference type="InterPro" id="IPR023665">
    <property type="entry name" value="ApgAM_prokaryotes"/>
</dbReference>
<dbReference type="InterPro" id="IPR006124">
    <property type="entry name" value="Metalloenzyme"/>
</dbReference>
<dbReference type="InterPro" id="IPR004456">
    <property type="entry name" value="Pglycerate_mutase_ApgM"/>
</dbReference>
<dbReference type="NCBIfam" id="TIGR00306">
    <property type="entry name" value="apgM"/>
    <property type="match status" value="1"/>
</dbReference>
<dbReference type="NCBIfam" id="NF003104">
    <property type="entry name" value="PRK04024.1"/>
    <property type="match status" value="1"/>
</dbReference>
<dbReference type="PANTHER" id="PTHR31209">
    <property type="entry name" value="COFACTOR-INDEPENDENT PHOSPHOGLYCERATE MUTASE"/>
    <property type="match status" value="1"/>
</dbReference>
<dbReference type="PANTHER" id="PTHR31209:SF0">
    <property type="entry name" value="METALLOENZYME DOMAIN-CONTAINING PROTEIN"/>
    <property type="match status" value="1"/>
</dbReference>
<dbReference type="Pfam" id="PF01676">
    <property type="entry name" value="Metalloenzyme"/>
    <property type="match status" value="1"/>
</dbReference>
<dbReference type="Pfam" id="PF10143">
    <property type="entry name" value="PhosphMutase"/>
    <property type="match status" value="1"/>
</dbReference>
<dbReference type="PIRSF" id="PIRSF006392">
    <property type="entry name" value="IPGAM_arch"/>
    <property type="match status" value="1"/>
</dbReference>
<dbReference type="SUPFAM" id="SSF53649">
    <property type="entry name" value="Alkaline phosphatase-like"/>
    <property type="match status" value="1"/>
</dbReference>
<feature type="chain" id="PRO_1000068383" description="2,3-bisphosphoglycerate-independent phosphoglycerate mutase">
    <location>
        <begin position="1"/>
        <end position="411"/>
    </location>
</feature>
<feature type="region of interest" description="Disordered" evidence="2">
    <location>
        <begin position="164"/>
        <end position="190"/>
    </location>
</feature>
<comment type="function">
    <text evidence="1">Catalyzes the interconversion of 2-phosphoglycerate and 3-phosphoglycerate.</text>
</comment>
<comment type="catalytic activity">
    <reaction evidence="1">
        <text>(2R)-2-phosphoglycerate = (2R)-3-phosphoglycerate</text>
        <dbReference type="Rhea" id="RHEA:15901"/>
        <dbReference type="ChEBI" id="CHEBI:58272"/>
        <dbReference type="ChEBI" id="CHEBI:58289"/>
        <dbReference type="EC" id="5.4.2.12"/>
    </reaction>
</comment>
<comment type="pathway">
    <text evidence="1">Carbohydrate degradation; glycolysis; pyruvate from D-glyceraldehyde 3-phosphate: step 3/5.</text>
</comment>
<comment type="similarity">
    <text evidence="1">Belongs to the BPG-independent phosphoglycerate mutase family. A-PGAM subfamily.</text>
</comment>
<accession>A3CSK8</accession>
<gene>
    <name evidence="1" type="primary">apgM</name>
    <name type="ordered locus">Memar_0425</name>
</gene>
<name>APGM_METMJ</name>
<sequence>MIAEKVLFLVLDGISDRPCEALDGLTPLAAARTPVLDRLAAEGVCGIMDSVAPGIRPGSDTSHLALLGYPPQEFYTGRGPLEAEGTGIHMTAGMIGFRCNFATVDADGLVTDRRAGRISGTEPLAEAIREGVDLSGLGLEFRFEAGAGHRAALALIGEGLGDKVSSNDPKKEGVQPLTIRPGSDDPADAKTARACNEFIRQSREILDGHPVNVRRMEEGLPPGNLLLIRGAGKMGALPQFPERYGLSGSVISAATLISGIGMVVGLEHIPVPGTTGSVDSDLDAKVRAAIGELGRKDFVLMNIKGADEAGHDGKSIQKRDFIEVIDKALAPLLDLKNTLILVCADHSTPCSVKDHSADPVPVVIRGPGVRIDRTNRFDEVSCAEGGLHRIRGRDLMPIILDLINKSHKYGA</sequence>
<organism>
    <name type="scientific">Methanoculleus marisnigri (strain ATCC 35101 / DSM 1498 / JR1)</name>
    <dbReference type="NCBI Taxonomy" id="368407"/>
    <lineage>
        <taxon>Archaea</taxon>
        <taxon>Methanobacteriati</taxon>
        <taxon>Methanobacteriota</taxon>
        <taxon>Stenosarchaea group</taxon>
        <taxon>Methanomicrobia</taxon>
        <taxon>Methanomicrobiales</taxon>
        <taxon>Methanomicrobiaceae</taxon>
        <taxon>Methanoculleus</taxon>
    </lineage>
</organism>
<proteinExistence type="inferred from homology"/>
<reference key="1">
    <citation type="journal article" date="2009" name="Stand. Genomic Sci.">
        <title>Complete genome sequence of Methanoculleus marisnigri Romesser et al. 1981 type strain JR1.</title>
        <authorList>
            <person name="Anderson I.J."/>
            <person name="Sieprawska-Lupa M."/>
            <person name="Lapidus A."/>
            <person name="Nolan M."/>
            <person name="Copeland A."/>
            <person name="Glavina Del Rio T."/>
            <person name="Tice H."/>
            <person name="Dalin E."/>
            <person name="Barry K."/>
            <person name="Saunders E."/>
            <person name="Han C."/>
            <person name="Brettin T."/>
            <person name="Detter J.C."/>
            <person name="Bruce D."/>
            <person name="Mikhailova N."/>
            <person name="Pitluck S."/>
            <person name="Hauser L."/>
            <person name="Land M."/>
            <person name="Lucas S."/>
            <person name="Richardson P."/>
            <person name="Whitman W.B."/>
            <person name="Kyrpides N.C."/>
        </authorList>
    </citation>
    <scope>NUCLEOTIDE SEQUENCE [LARGE SCALE GENOMIC DNA]</scope>
    <source>
        <strain>ATCC 35101 / DSM 1498 / JR1</strain>
    </source>
</reference>
<protein>
    <recommendedName>
        <fullName evidence="1">2,3-bisphosphoglycerate-independent phosphoglycerate mutase</fullName>
        <shortName evidence="1">BPG-independent PGAM</shortName>
        <shortName evidence="1">Phosphoglyceromutase</shortName>
        <shortName evidence="1">aPGAM</shortName>
        <ecNumber evidence="1">5.4.2.12</ecNumber>
    </recommendedName>
</protein>
<keyword id="KW-0324">Glycolysis</keyword>
<keyword id="KW-0413">Isomerase</keyword>